<sequence>MSPGYLPAPKAVLGSVPEKHLAEEDEVDSILLSASKILNSSEGVKESGGNEPEYGCASEPENQIQPQSALKVLQHQLESFQALRMQTLQNVSMVQSEISEILNKSIVEVETPQFNSEKSLVFSMHPEKDLPNETQEEIPSTKTLHSMGETFSSNSDTGLPQGTDIPPQIQVKDMLALQGLRTTADNSPPKKAMNTSEQPSATKSFSLYQFLPQGPQTAVPQAAPVILDKSTITTPFPKHGFCANLDDICHSIKHMKEELQKSHDKELALTSELHTFQADASTQGHHKHEPFPMHSSKLNFIQQENMEGNLSEDMKSKRISELEALVSKLLPLRDTVSKLHVNFCRKCKKLSKSEVYRGKKNEKNKDIPITSKNIMDLKFHSRAPRYTLSVLDLGKHKIKDKEGQAFIVSQGPATLENEKLPKGKFIPEQCVPKQSVAKIHYLQNYLKESLQNQKKMTELENENLALKTKMKPLVFTAQSLIQKVEAHEKQLKSLAEEKSALQSKLSKAEEENKDCLRELKKIVSTYNVLGGQHKMLEEKNSQLSLEKQQMLETIDHLKSKEHKSQSDMAVLQNENSRMNIEIEAMKTSMLLVQDEREMLEKETYQLLKDKSTLESDLKESKLEILQLKEKERLIKAEQESLLHSLDTAKAEKLSLEATLQESTSTRQKLERKLVDIQAYQSAAEEKFLKEIKSAKSETSIYKNNLAEISKECEILSKMVMEIKADNQILKEELKKHSQENTKFENSISRLTEDKILLENYVRSIENEKDTLEFEMRNLQRDYLSLSDKVSSQNNSASKSTYISRREKLYFDNYDAYEDASSLRNRPVASDLKGIPHKLYQRLPSKICK</sequence>
<proteinExistence type="evidence at protein level"/>
<gene>
    <name type="primary">Ccdc110</name>
    <name type="synonym">Gm172</name>
</gene>
<name>CC110_MOUSE</name>
<evidence type="ECO:0000250" key="1"/>
<evidence type="ECO:0000255" key="2"/>
<evidence type="ECO:0000256" key="3">
    <source>
        <dbReference type="SAM" id="MobiDB-lite"/>
    </source>
</evidence>
<evidence type="ECO:0000305" key="4"/>
<evidence type="ECO:0007744" key="5">
    <source>
    </source>
</evidence>
<protein>
    <recommendedName>
        <fullName>Coiled-coil domain-containing protein 110</fullName>
    </recommendedName>
</protein>
<reference key="1">
    <citation type="journal article" date="2005" name="Science">
        <title>The transcriptional landscape of the mammalian genome.</title>
        <authorList>
            <person name="Carninci P."/>
            <person name="Kasukawa T."/>
            <person name="Katayama S."/>
            <person name="Gough J."/>
            <person name="Frith M.C."/>
            <person name="Maeda N."/>
            <person name="Oyama R."/>
            <person name="Ravasi T."/>
            <person name="Lenhard B."/>
            <person name="Wells C."/>
            <person name="Kodzius R."/>
            <person name="Shimokawa K."/>
            <person name="Bajic V.B."/>
            <person name="Brenner S.E."/>
            <person name="Batalov S."/>
            <person name="Forrest A.R."/>
            <person name="Zavolan M."/>
            <person name="Davis M.J."/>
            <person name="Wilming L.G."/>
            <person name="Aidinis V."/>
            <person name="Allen J.E."/>
            <person name="Ambesi-Impiombato A."/>
            <person name="Apweiler R."/>
            <person name="Aturaliya R.N."/>
            <person name="Bailey T.L."/>
            <person name="Bansal M."/>
            <person name="Baxter L."/>
            <person name="Beisel K.W."/>
            <person name="Bersano T."/>
            <person name="Bono H."/>
            <person name="Chalk A.M."/>
            <person name="Chiu K.P."/>
            <person name="Choudhary V."/>
            <person name="Christoffels A."/>
            <person name="Clutterbuck D.R."/>
            <person name="Crowe M.L."/>
            <person name="Dalla E."/>
            <person name="Dalrymple B.P."/>
            <person name="de Bono B."/>
            <person name="Della Gatta G."/>
            <person name="di Bernardo D."/>
            <person name="Down T."/>
            <person name="Engstrom P."/>
            <person name="Fagiolini M."/>
            <person name="Faulkner G."/>
            <person name="Fletcher C.F."/>
            <person name="Fukushima T."/>
            <person name="Furuno M."/>
            <person name="Futaki S."/>
            <person name="Gariboldi M."/>
            <person name="Georgii-Hemming P."/>
            <person name="Gingeras T.R."/>
            <person name="Gojobori T."/>
            <person name="Green R.E."/>
            <person name="Gustincich S."/>
            <person name="Harbers M."/>
            <person name="Hayashi Y."/>
            <person name="Hensch T.K."/>
            <person name="Hirokawa N."/>
            <person name="Hill D."/>
            <person name="Huminiecki L."/>
            <person name="Iacono M."/>
            <person name="Ikeo K."/>
            <person name="Iwama A."/>
            <person name="Ishikawa T."/>
            <person name="Jakt M."/>
            <person name="Kanapin A."/>
            <person name="Katoh M."/>
            <person name="Kawasawa Y."/>
            <person name="Kelso J."/>
            <person name="Kitamura H."/>
            <person name="Kitano H."/>
            <person name="Kollias G."/>
            <person name="Krishnan S.P."/>
            <person name="Kruger A."/>
            <person name="Kummerfeld S.K."/>
            <person name="Kurochkin I.V."/>
            <person name="Lareau L.F."/>
            <person name="Lazarevic D."/>
            <person name="Lipovich L."/>
            <person name="Liu J."/>
            <person name="Liuni S."/>
            <person name="McWilliam S."/>
            <person name="Madan Babu M."/>
            <person name="Madera M."/>
            <person name="Marchionni L."/>
            <person name="Matsuda H."/>
            <person name="Matsuzawa S."/>
            <person name="Miki H."/>
            <person name="Mignone F."/>
            <person name="Miyake S."/>
            <person name="Morris K."/>
            <person name="Mottagui-Tabar S."/>
            <person name="Mulder N."/>
            <person name="Nakano N."/>
            <person name="Nakauchi H."/>
            <person name="Ng P."/>
            <person name="Nilsson R."/>
            <person name="Nishiguchi S."/>
            <person name="Nishikawa S."/>
            <person name="Nori F."/>
            <person name="Ohara O."/>
            <person name="Okazaki Y."/>
            <person name="Orlando V."/>
            <person name="Pang K.C."/>
            <person name="Pavan W.J."/>
            <person name="Pavesi G."/>
            <person name="Pesole G."/>
            <person name="Petrovsky N."/>
            <person name="Piazza S."/>
            <person name="Reed J."/>
            <person name="Reid J.F."/>
            <person name="Ring B.Z."/>
            <person name="Ringwald M."/>
            <person name="Rost B."/>
            <person name="Ruan Y."/>
            <person name="Salzberg S.L."/>
            <person name="Sandelin A."/>
            <person name="Schneider C."/>
            <person name="Schoenbach C."/>
            <person name="Sekiguchi K."/>
            <person name="Semple C.A."/>
            <person name="Seno S."/>
            <person name="Sessa L."/>
            <person name="Sheng Y."/>
            <person name="Shibata Y."/>
            <person name="Shimada H."/>
            <person name="Shimada K."/>
            <person name="Silva D."/>
            <person name="Sinclair B."/>
            <person name="Sperling S."/>
            <person name="Stupka E."/>
            <person name="Sugiura K."/>
            <person name="Sultana R."/>
            <person name="Takenaka Y."/>
            <person name="Taki K."/>
            <person name="Tammoja K."/>
            <person name="Tan S.L."/>
            <person name="Tang S."/>
            <person name="Taylor M.S."/>
            <person name="Tegner J."/>
            <person name="Teichmann S.A."/>
            <person name="Ueda H.R."/>
            <person name="van Nimwegen E."/>
            <person name="Verardo R."/>
            <person name="Wei C.L."/>
            <person name="Yagi K."/>
            <person name="Yamanishi H."/>
            <person name="Zabarovsky E."/>
            <person name="Zhu S."/>
            <person name="Zimmer A."/>
            <person name="Hide W."/>
            <person name="Bult C."/>
            <person name="Grimmond S.M."/>
            <person name="Teasdale R.D."/>
            <person name="Liu E.T."/>
            <person name="Brusic V."/>
            <person name="Quackenbush J."/>
            <person name="Wahlestedt C."/>
            <person name="Mattick J.S."/>
            <person name="Hume D.A."/>
            <person name="Kai C."/>
            <person name="Sasaki D."/>
            <person name="Tomaru Y."/>
            <person name="Fukuda S."/>
            <person name="Kanamori-Katayama M."/>
            <person name="Suzuki M."/>
            <person name="Aoki J."/>
            <person name="Arakawa T."/>
            <person name="Iida J."/>
            <person name="Imamura K."/>
            <person name="Itoh M."/>
            <person name="Kato T."/>
            <person name="Kawaji H."/>
            <person name="Kawagashira N."/>
            <person name="Kawashima T."/>
            <person name="Kojima M."/>
            <person name="Kondo S."/>
            <person name="Konno H."/>
            <person name="Nakano K."/>
            <person name="Ninomiya N."/>
            <person name="Nishio T."/>
            <person name="Okada M."/>
            <person name="Plessy C."/>
            <person name="Shibata K."/>
            <person name="Shiraki T."/>
            <person name="Suzuki S."/>
            <person name="Tagami M."/>
            <person name="Waki K."/>
            <person name="Watahiki A."/>
            <person name="Okamura-Oho Y."/>
            <person name="Suzuki H."/>
            <person name="Kawai J."/>
            <person name="Hayashizaki Y."/>
        </authorList>
    </citation>
    <scope>NUCLEOTIDE SEQUENCE [LARGE SCALE MRNA]</scope>
    <source>
        <strain>C57BL/6J</strain>
        <tissue>Testis</tissue>
    </source>
</reference>
<reference key="2">
    <citation type="journal article" date="2010" name="Cell">
        <title>A tissue-specific atlas of mouse protein phosphorylation and expression.</title>
        <authorList>
            <person name="Huttlin E.L."/>
            <person name="Jedrychowski M.P."/>
            <person name="Elias J.E."/>
            <person name="Goswami T."/>
            <person name="Rad R."/>
            <person name="Beausoleil S.A."/>
            <person name="Villen J."/>
            <person name="Haas W."/>
            <person name="Sowa M.E."/>
            <person name="Gygi S.P."/>
        </authorList>
    </citation>
    <scope>PHOSPHORYLATION [LARGE SCALE ANALYSIS] AT SER-620</scope>
    <scope>IDENTIFICATION BY MASS SPECTROMETRY [LARGE SCALE ANALYSIS]</scope>
    <source>
        <tissue>Brown adipose tissue</tissue>
    </source>
</reference>
<feature type="chain" id="PRO_0000249078" description="Coiled-coil domain-containing protein 110">
    <location>
        <begin position="1"/>
        <end position="848"/>
    </location>
</feature>
<feature type="region of interest" description="Disordered" evidence="3">
    <location>
        <begin position="41"/>
        <end position="62"/>
    </location>
</feature>
<feature type="coiled-coil region" evidence="2">
    <location>
        <begin position="442"/>
        <end position="794"/>
    </location>
</feature>
<feature type="modified residue" description="Phosphoserine" evidence="5">
    <location>
        <position position="620"/>
    </location>
</feature>
<feature type="sequence conflict" description="In Ref. 1; BAE36267." evidence="4" ref="1">
    <original>N</original>
    <variation>D</variation>
    <location>
        <position position="115"/>
    </location>
</feature>
<comment type="subcellular location">
    <subcellularLocation>
        <location evidence="1">Nucleus</location>
    </subcellularLocation>
</comment>
<accession>Q3V125</accession>
<accession>Q3TTQ8</accession>
<keyword id="KW-0175">Coiled coil</keyword>
<keyword id="KW-0539">Nucleus</keyword>
<keyword id="KW-0597">Phosphoprotein</keyword>
<keyword id="KW-1185">Reference proteome</keyword>
<organism>
    <name type="scientific">Mus musculus</name>
    <name type="common">Mouse</name>
    <dbReference type="NCBI Taxonomy" id="10090"/>
    <lineage>
        <taxon>Eukaryota</taxon>
        <taxon>Metazoa</taxon>
        <taxon>Chordata</taxon>
        <taxon>Craniata</taxon>
        <taxon>Vertebrata</taxon>
        <taxon>Euteleostomi</taxon>
        <taxon>Mammalia</taxon>
        <taxon>Eutheria</taxon>
        <taxon>Euarchontoglires</taxon>
        <taxon>Glires</taxon>
        <taxon>Rodentia</taxon>
        <taxon>Myomorpha</taxon>
        <taxon>Muroidea</taxon>
        <taxon>Muridae</taxon>
        <taxon>Murinae</taxon>
        <taxon>Mus</taxon>
        <taxon>Mus</taxon>
    </lineage>
</organism>
<dbReference type="EMBL" id="AK132742">
    <property type="protein sequence ID" value="BAE21328.1"/>
    <property type="molecule type" value="mRNA"/>
</dbReference>
<dbReference type="EMBL" id="AK161248">
    <property type="protein sequence ID" value="BAE36267.1"/>
    <property type="molecule type" value="mRNA"/>
</dbReference>
<dbReference type="CCDS" id="CCDS22282.1"/>
<dbReference type="RefSeq" id="NP_001028418.1">
    <property type="nucleotide sequence ID" value="NM_001033246.3"/>
</dbReference>
<dbReference type="SMR" id="Q3V125"/>
<dbReference type="BioGRID" id="229317">
    <property type="interactions" value="1"/>
</dbReference>
<dbReference type="FunCoup" id="Q3V125">
    <property type="interactions" value="422"/>
</dbReference>
<dbReference type="IntAct" id="Q3V125">
    <property type="interactions" value="1"/>
</dbReference>
<dbReference type="STRING" id="10090.ENSMUSP00000092964"/>
<dbReference type="iPTMnet" id="Q3V125"/>
<dbReference type="PhosphoSitePlus" id="Q3V125"/>
<dbReference type="PaxDb" id="10090-ENSMUSP00000092964"/>
<dbReference type="ProteomicsDB" id="281238"/>
<dbReference type="Ensembl" id="ENSMUST00000095326.10">
    <property type="protein sequence ID" value="ENSMUSP00000092964.4"/>
    <property type="gene ID" value="ENSMUSG00000071104.11"/>
</dbReference>
<dbReference type="GeneID" id="212392"/>
<dbReference type="KEGG" id="mmu:212392"/>
<dbReference type="UCSC" id="uc009lpm.1">
    <property type="organism name" value="mouse"/>
</dbReference>
<dbReference type="AGR" id="MGI:2685018"/>
<dbReference type="CTD" id="256309"/>
<dbReference type="MGI" id="MGI:2685018">
    <property type="gene designation" value="Ccdc110"/>
</dbReference>
<dbReference type="VEuPathDB" id="HostDB:ENSMUSG00000071104"/>
<dbReference type="eggNOG" id="ENOG502QR3F">
    <property type="taxonomic scope" value="Eukaryota"/>
</dbReference>
<dbReference type="GeneTree" id="ENSGT01100000263660"/>
<dbReference type="HOGENOM" id="CLU_018125_0_0_1"/>
<dbReference type="InParanoid" id="Q3V125"/>
<dbReference type="OMA" id="CQIHFKD"/>
<dbReference type="OrthoDB" id="9947236at2759"/>
<dbReference type="PhylomeDB" id="Q3V125"/>
<dbReference type="TreeFam" id="TF335739"/>
<dbReference type="BioGRID-ORCS" id="212392">
    <property type="hits" value="1 hit in 76 CRISPR screens"/>
</dbReference>
<dbReference type="PRO" id="PR:Q3V125"/>
<dbReference type="Proteomes" id="UP000000589">
    <property type="component" value="Chromosome 8"/>
</dbReference>
<dbReference type="RNAct" id="Q3V125">
    <property type="molecule type" value="protein"/>
</dbReference>
<dbReference type="Bgee" id="ENSMUSG00000071104">
    <property type="expression patterns" value="Expressed in seminiferous tubule of testis and 20 other cell types or tissues"/>
</dbReference>
<dbReference type="ExpressionAtlas" id="Q3V125">
    <property type="expression patterns" value="baseline and differential"/>
</dbReference>
<dbReference type="GO" id="GO:0005634">
    <property type="term" value="C:nucleus"/>
    <property type="evidence" value="ECO:0007669"/>
    <property type="project" value="UniProtKB-SubCell"/>
</dbReference>
<dbReference type="PANTHER" id="PTHR32083">
    <property type="entry name" value="CILIA AND FLAGELLA-ASSOCIATED PROTEIN 58-RELATED"/>
    <property type="match status" value="1"/>
</dbReference>
<dbReference type="PANTHER" id="PTHR32083:SF32">
    <property type="entry name" value="COILED-COIL DOMAIN-CONTAINING PROTEIN 110"/>
    <property type="match status" value="1"/>
</dbReference>